<keyword id="KW-0227">DNA damage</keyword>
<keyword id="KW-0234">DNA repair</keyword>
<keyword id="KW-0238">DNA-binding</keyword>
<keyword id="KW-0326">Glycosidase</keyword>
<keyword id="KW-0378">Hydrolase</keyword>
<keyword id="KW-0456">Lyase</keyword>
<keyword id="KW-0479">Metal-binding</keyword>
<keyword id="KW-0511">Multifunctional enzyme</keyword>
<keyword id="KW-1185">Reference proteome</keyword>
<keyword id="KW-0862">Zinc</keyword>
<keyword id="KW-0863">Zinc-finger</keyword>
<gene>
    <name evidence="2" type="primary">mutM</name>
    <name evidence="2" type="synonym">fpg</name>
    <name type="ordered locus">Geob_1575</name>
</gene>
<organism>
    <name type="scientific">Geotalea daltonii (strain DSM 22248 / JCM 15807 / FRC-32)</name>
    <name type="common">Geobacter daltonii</name>
    <dbReference type="NCBI Taxonomy" id="316067"/>
    <lineage>
        <taxon>Bacteria</taxon>
        <taxon>Pseudomonadati</taxon>
        <taxon>Thermodesulfobacteriota</taxon>
        <taxon>Desulfuromonadia</taxon>
        <taxon>Geobacterales</taxon>
        <taxon>Geobacteraceae</taxon>
        <taxon>Geotalea</taxon>
    </lineage>
</organism>
<name>FPG_GEODF</name>
<proteinExistence type="inferred from homology"/>
<comment type="function">
    <text evidence="2">Involved in base excision repair of DNA damaged by oxidation or by mutagenic agents. Acts as a DNA glycosylase that recognizes and removes damaged bases. Has a preference for oxidized purines, such as 7,8-dihydro-8-oxoguanine (8-oxoG). Has AP (apurinic/apyrimidinic) lyase activity and introduces nicks in the DNA strand. Cleaves the DNA backbone by beta-delta elimination to generate a single-strand break at the site of the removed base with both 3'- and 5'-phosphates.</text>
</comment>
<comment type="catalytic activity">
    <reaction evidence="2">
        <text>Hydrolysis of DNA containing ring-opened 7-methylguanine residues, releasing 2,6-diamino-4-hydroxy-5-(N-methyl)formamidopyrimidine.</text>
        <dbReference type="EC" id="3.2.2.23"/>
    </reaction>
</comment>
<comment type="catalytic activity">
    <reaction evidence="2">
        <text>2'-deoxyribonucleotide-(2'-deoxyribose 5'-phosphate)-2'-deoxyribonucleotide-DNA = a 3'-end 2'-deoxyribonucleotide-(2,3-dehydro-2,3-deoxyribose 5'-phosphate)-DNA + a 5'-end 5'-phospho-2'-deoxyribonucleoside-DNA + H(+)</text>
        <dbReference type="Rhea" id="RHEA:66592"/>
        <dbReference type="Rhea" id="RHEA-COMP:13180"/>
        <dbReference type="Rhea" id="RHEA-COMP:16897"/>
        <dbReference type="Rhea" id="RHEA-COMP:17067"/>
        <dbReference type="ChEBI" id="CHEBI:15378"/>
        <dbReference type="ChEBI" id="CHEBI:136412"/>
        <dbReference type="ChEBI" id="CHEBI:157695"/>
        <dbReference type="ChEBI" id="CHEBI:167181"/>
        <dbReference type="EC" id="4.2.99.18"/>
    </reaction>
</comment>
<comment type="cofactor">
    <cofactor evidence="2">
        <name>Zn(2+)</name>
        <dbReference type="ChEBI" id="CHEBI:29105"/>
    </cofactor>
    <text evidence="2">Binds 1 zinc ion per subunit.</text>
</comment>
<comment type="subunit">
    <text evidence="2">Monomer.</text>
</comment>
<comment type="similarity">
    <text evidence="2">Belongs to the FPG family.</text>
</comment>
<feature type="initiator methionine" description="Removed" evidence="1">
    <location>
        <position position="1"/>
    </location>
</feature>
<feature type="chain" id="PRO_1000118890" description="Formamidopyrimidine-DNA glycosylase">
    <location>
        <begin position="2"/>
        <end position="271"/>
    </location>
</feature>
<feature type="zinc finger region" description="FPG-type" evidence="2">
    <location>
        <begin position="237"/>
        <end position="271"/>
    </location>
</feature>
<feature type="active site" description="Schiff-base intermediate with DNA" evidence="2">
    <location>
        <position position="2"/>
    </location>
</feature>
<feature type="active site" description="Proton donor" evidence="2">
    <location>
        <position position="3"/>
    </location>
</feature>
<feature type="active site" description="Proton donor; for beta-elimination activity" evidence="2">
    <location>
        <position position="58"/>
    </location>
</feature>
<feature type="active site" description="Proton donor; for delta-elimination activity" evidence="2">
    <location>
        <position position="261"/>
    </location>
</feature>
<feature type="binding site" evidence="2">
    <location>
        <position position="91"/>
    </location>
    <ligand>
        <name>DNA</name>
        <dbReference type="ChEBI" id="CHEBI:16991"/>
    </ligand>
</feature>
<feature type="binding site" evidence="2">
    <location>
        <position position="110"/>
    </location>
    <ligand>
        <name>DNA</name>
        <dbReference type="ChEBI" id="CHEBI:16991"/>
    </ligand>
</feature>
<feature type="binding site" evidence="2">
    <location>
        <position position="152"/>
    </location>
    <ligand>
        <name>DNA</name>
        <dbReference type="ChEBI" id="CHEBI:16991"/>
    </ligand>
</feature>
<protein>
    <recommendedName>
        <fullName evidence="2">Formamidopyrimidine-DNA glycosylase</fullName>
        <shortName evidence="2">Fapy-DNA glycosylase</shortName>
        <ecNumber evidence="2">3.2.2.23</ecNumber>
    </recommendedName>
    <alternativeName>
        <fullName evidence="2">DNA-(apurinic or apyrimidinic site) lyase MutM</fullName>
        <shortName evidence="2">AP lyase MutM</shortName>
        <ecNumber evidence="2">4.2.99.18</ecNumber>
    </alternativeName>
</protein>
<evidence type="ECO:0000250" key="1"/>
<evidence type="ECO:0000255" key="2">
    <source>
        <dbReference type="HAMAP-Rule" id="MF_00103"/>
    </source>
</evidence>
<reference key="1">
    <citation type="submission" date="2009-01" db="EMBL/GenBank/DDBJ databases">
        <title>Complete sequence of Geobacter sp. FRC-32.</title>
        <authorList>
            <consortium name="US DOE Joint Genome Institute"/>
            <person name="Lucas S."/>
            <person name="Copeland A."/>
            <person name="Lapidus A."/>
            <person name="Glavina del Rio T."/>
            <person name="Dalin E."/>
            <person name="Tice H."/>
            <person name="Bruce D."/>
            <person name="Goodwin L."/>
            <person name="Pitluck S."/>
            <person name="Saunders E."/>
            <person name="Brettin T."/>
            <person name="Detter J.C."/>
            <person name="Han C."/>
            <person name="Larimer F."/>
            <person name="Land M."/>
            <person name="Hauser L."/>
            <person name="Kyrpides N."/>
            <person name="Ovchinnikova G."/>
            <person name="Kostka J."/>
            <person name="Richardson P."/>
        </authorList>
    </citation>
    <scope>NUCLEOTIDE SEQUENCE [LARGE SCALE GENOMIC DNA]</scope>
    <source>
        <strain>DSM 22248 / JCM 15807 / FRC-32</strain>
    </source>
</reference>
<dbReference type="EC" id="3.2.2.23" evidence="2"/>
<dbReference type="EC" id="4.2.99.18" evidence="2"/>
<dbReference type="EMBL" id="CP001390">
    <property type="protein sequence ID" value="ACM19933.1"/>
    <property type="molecule type" value="Genomic_DNA"/>
</dbReference>
<dbReference type="RefSeq" id="WP_012646662.1">
    <property type="nucleotide sequence ID" value="NC_011979.1"/>
</dbReference>
<dbReference type="SMR" id="B9M5V2"/>
<dbReference type="STRING" id="316067.Geob_1575"/>
<dbReference type="KEGG" id="geo:Geob_1575"/>
<dbReference type="eggNOG" id="COG0266">
    <property type="taxonomic scope" value="Bacteria"/>
</dbReference>
<dbReference type="HOGENOM" id="CLU_038423_1_1_7"/>
<dbReference type="OrthoDB" id="9800855at2"/>
<dbReference type="Proteomes" id="UP000007721">
    <property type="component" value="Chromosome"/>
</dbReference>
<dbReference type="GO" id="GO:0034039">
    <property type="term" value="F:8-oxo-7,8-dihydroguanine DNA N-glycosylase activity"/>
    <property type="evidence" value="ECO:0007669"/>
    <property type="project" value="TreeGrafter"/>
</dbReference>
<dbReference type="GO" id="GO:0140078">
    <property type="term" value="F:class I DNA-(apurinic or apyrimidinic site) endonuclease activity"/>
    <property type="evidence" value="ECO:0007669"/>
    <property type="project" value="UniProtKB-EC"/>
</dbReference>
<dbReference type="GO" id="GO:0003684">
    <property type="term" value="F:damaged DNA binding"/>
    <property type="evidence" value="ECO:0007669"/>
    <property type="project" value="InterPro"/>
</dbReference>
<dbReference type="GO" id="GO:0008270">
    <property type="term" value="F:zinc ion binding"/>
    <property type="evidence" value="ECO:0007669"/>
    <property type="project" value="UniProtKB-UniRule"/>
</dbReference>
<dbReference type="GO" id="GO:0006284">
    <property type="term" value="P:base-excision repair"/>
    <property type="evidence" value="ECO:0007669"/>
    <property type="project" value="InterPro"/>
</dbReference>
<dbReference type="CDD" id="cd08966">
    <property type="entry name" value="EcFpg-like_N"/>
    <property type="match status" value="1"/>
</dbReference>
<dbReference type="FunFam" id="1.10.8.50:FF:000003">
    <property type="entry name" value="Formamidopyrimidine-DNA glycosylase"/>
    <property type="match status" value="1"/>
</dbReference>
<dbReference type="Gene3D" id="1.10.8.50">
    <property type="match status" value="1"/>
</dbReference>
<dbReference type="Gene3D" id="3.20.190.10">
    <property type="entry name" value="MutM-like, N-terminal"/>
    <property type="match status" value="1"/>
</dbReference>
<dbReference type="HAMAP" id="MF_00103">
    <property type="entry name" value="Fapy_DNA_glycosyl"/>
    <property type="match status" value="1"/>
</dbReference>
<dbReference type="InterPro" id="IPR015886">
    <property type="entry name" value="DNA_glyclase/AP_lyase_DNA-bd"/>
</dbReference>
<dbReference type="InterPro" id="IPR015887">
    <property type="entry name" value="DNA_glyclase_Znf_dom_DNA_BS"/>
</dbReference>
<dbReference type="InterPro" id="IPR020629">
    <property type="entry name" value="Formamido-pyr_DNA_Glyclase"/>
</dbReference>
<dbReference type="InterPro" id="IPR012319">
    <property type="entry name" value="FPG_cat"/>
</dbReference>
<dbReference type="InterPro" id="IPR035937">
    <property type="entry name" value="MutM-like_N-ter"/>
</dbReference>
<dbReference type="InterPro" id="IPR010979">
    <property type="entry name" value="Ribosomal_uS13-like_H2TH"/>
</dbReference>
<dbReference type="InterPro" id="IPR000214">
    <property type="entry name" value="Znf_DNA_glyclase/AP_lyase"/>
</dbReference>
<dbReference type="InterPro" id="IPR010663">
    <property type="entry name" value="Znf_FPG/IleRS"/>
</dbReference>
<dbReference type="NCBIfam" id="TIGR00577">
    <property type="entry name" value="fpg"/>
    <property type="match status" value="1"/>
</dbReference>
<dbReference type="NCBIfam" id="NF002211">
    <property type="entry name" value="PRK01103.1"/>
    <property type="match status" value="1"/>
</dbReference>
<dbReference type="PANTHER" id="PTHR22993">
    <property type="entry name" value="FORMAMIDOPYRIMIDINE-DNA GLYCOSYLASE"/>
    <property type="match status" value="1"/>
</dbReference>
<dbReference type="PANTHER" id="PTHR22993:SF9">
    <property type="entry name" value="FORMAMIDOPYRIMIDINE-DNA GLYCOSYLASE"/>
    <property type="match status" value="1"/>
</dbReference>
<dbReference type="Pfam" id="PF01149">
    <property type="entry name" value="Fapy_DNA_glyco"/>
    <property type="match status" value="1"/>
</dbReference>
<dbReference type="Pfam" id="PF06831">
    <property type="entry name" value="H2TH"/>
    <property type="match status" value="1"/>
</dbReference>
<dbReference type="Pfam" id="PF06827">
    <property type="entry name" value="zf-FPG_IleRS"/>
    <property type="match status" value="1"/>
</dbReference>
<dbReference type="SMART" id="SM00898">
    <property type="entry name" value="Fapy_DNA_glyco"/>
    <property type="match status" value="1"/>
</dbReference>
<dbReference type="SMART" id="SM01232">
    <property type="entry name" value="H2TH"/>
    <property type="match status" value="1"/>
</dbReference>
<dbReference type="SUPFAM" id="SSF57716">
    <property type="entry name" value="Glucocorticoid receptor-like (DNA-binding domain)"/>
    <property type="match status" value="1"/>
</dbReference>
<dbReference type="SUPFAM" id="SSF81624">
    <property type="entry name" value="N-terminal domain of MutM-like DNA repair proteins"/>
    <property type="match status" value="1"/>
</dbReference>
<dbReference type="SUPFAM" id="SSF46946">
    <property type="entry name" value="S13-like H2TH domain"/>
    <property type="match status" value="1"/>
</dbReference>
<dbReference type="PROSITE" id="PS51068">
    <property type="entry name" value="FPG_CAT"/>
    <property type="match status" value="1"/>
</dbReference>
<dbReference type="PROSITE" id="PS01242">
    <property type="entry name" value="ZF_FPG_1"/>
    <property type="match status" value="1"/>
</dbReference>
<dbReference type="PROSITE" id="PS51066">
    <property type="entry name" value="ZF_FPG_2"/>
    <property type="match status" value="1"/>
</dbReference>
<accession>B9M5V2</accession>
<sequence>MPELPEVETIRRAVGPQVRGKRIIHTNVRATKLRHPLPPELDRLLVGQLIVAMDRRGKYLLLRCKGGTIIFHLGMTGMLYLVKASSPHGKHDHLDLVLDGSYILRFTDPRRFGTIIWTDNDPLQHPLLVAHGPEPLEAEFSASYLYLKRHRRKIPIKQLIMDSRVVAGIGNIYANESLFRAGIAPQTSASDLSPDKDLLLVDAIKGVLTDAVEAGTSNIESALTGERPQGYFPYEFSIYGKKGRPCPKCGSAIRMMRLGGRSTFFCPLCQK</sequence>